<protein>
    <recommendedName>
        <fullName evidence="1">Small ribosomal subunit protein uS14c</fullName>
    </recommendedName>
    <alternativeName>
        <fullName evidence="3">30S ribosomal protein S14, chloroplastic</fullName>
    </alternativeName>
</protein>
<accession>A1E9S2</accession>
<organism>
    <name type="scientific">Sorghum bicolor</name>
    <name type="common">Sorghum</name>
    <name type="synonym">Sorghum vulgare</name>
    <dbReference type="NCBI Taxonomy" id="4558"/>
    <lineage>
        <taxon>Eukaryota</taxon>
        <taxon>Viridiplantae</taxon>
        <taxon>Streptophyta</taxon>
        <taxon>Embryophyta</taxon>
        <taxon>Tracheophyta</taxon>
        <taxon>Spermatophyta</taxon>
        <taxon>Magnoliopsida</taxon>
        <taxon>Liliopsida</taxon>
        <taxon>Poales</taxon>
        <taxon>Poaceae</taxon>
        <taxon>PACMAD clade</taxon>
        <taxon>Panicoideae</taxon>
        <taxon>Andropogonodae</taxon>
        <taxon>Andropogoneae</taxon>
        <taxon>Sorghinae</taxon>
        <taxon>Sorghum</taxon>
    </lineage>
</organism>
<geneLocation type="chloroplast"/>
<name>RR14_SORBI</name>
<evidence type="ECO:0000255" key="1">
    <source>
        <dbReference type="HAMAP-Rule" id="MF_00537"/>
    </source>
</evidence>
<evidence type="ECO:0000256" key="2">
    <source>
        <dbReference type="SAM" id="MobiDB-lite"/>
    </source>
</evidence>
<evidence type="ECO:0000305" key="3"/>
<sequence>MAKKSLIQREKKRHKLEQKYHLIRRSSKKKIRSKVSPLSLSEKTKMQEKLQSLPRNSAPTRLHRRCFLTGRPRANYRDFGLSGHILREMVYACLLPGATRSSW</sequence>
<proteinExistence type="inferred from homology"/>
<reference key="1">
    <citation type="journal article" date="2007" name="Theor. Appl. Genet.">
        <title>Complete chloroplast genome sequences of Hordeum vulgare, Sorghum bicolor and Agrostis stolonifera, and comparative analyses with other grass genomes.</title>
        <authorList>
            <person name="Saski C."/>
            <person name="Lee S.-B."/>
            <person name="Fjellheim S."/>
            <person name="Guda C."/>
            <person name="Jansen R.K."/>
            <person name="Luo H."/>
            <person name="Tomkins J."/>
            <person name="Rognli O.A."/>
            <person name="Daniell H."/>
            <person name="Clarke J.L."/>
        </authorList>
    </citation>
    <scope>NUCLEOTIDE SEQUENCE [LARGE SCALE GENOMIC DNA]</scope>
    <source>
        <strain>cv. BTx623</strain>
    </source>
</reference>
<comment type="function">
    <text evidence="1">Binds 16S rRNA, required for the assembly of 30S particles.</text>
</comment>
<comment type="subunit">
    <text evidence="1">Part of the 30S ribosomal subunit.</text>
</comment>
<comment type="subcellular location">
    <subcellularLocation>
        <location>Plastid</location>
        <location>Chloroplast</location>
    </subcellularLocation>
</comment>
<comment type="similarity">
    <text evidence="1">Belongs to the universal ribosomal protein uS14 family.</text>
</comment>
<gene>
    <name evidence="1" type="primary">rps14</name>
</gene>
<dbReference type="EMBL" id="EF115542">
    <property type="protein sequence ID" value="ABK79494.1"/>
    <property type="molecule type" value="Genomic_DNA"/>
</dbReference>
<dbReference type="RefSeq" id="YP_899405.1">
    <property type="nucleotide sequence ID" value="NC_008602.1"/>
</dbReference>
<dbReference type="SMR" id="A1E9S2"/>
<dbReference type="FunCoup" id="A1E9S2">
    <property type="interactions" value="1"/>
</dbReference>
<dbReference type="STRING" id="4558.A1E9S2"/>
<dbReference type="GeneID" id="4549118"/>
<dbReference type="KEGG" id="sbi:4549118"/>
<dbReference type="InParanoid" id="A1E9S2"/>
<dbReference type="OrthoDB" id="413436at2759"/>
<dbReference type="Proteomes" id="UP000000768">
    <property type="component" value="Chloroplast"/>
</dbReference>
<dbReference type="GO" id="GO:0009507">
    <property type="term" value="C:chloroplast"/>
    <property type="evidence" value="ECO:0007669"/>
    <property type="project" value="UniProtKB-SubCell"/>
</dbReference>
<dbReference type="GO" id="GO:0015935">
    <property type="term" value="C:small ribosomal subunit"/>
    <property type="evidence" value="ECO:0000318"/>
    <property type="project" value="GO_Central"/>
</dbReference>
<dbReference type="GO" id="GO:0019843">
    <property type="term" value="F:rRNA binding"/>
    <property type="evidence" value="ECO:0007669"/>
    <property type="project" value="UniProtKB-UniRule"/>
</dbReference>
<dbReference type="GO" id="GO:0003735">
    <property type="term" value="F:structural constituent of ribosome"/>
    <property type="evidence" value="ECO:0000318"/>
    <property type="project" value="GO_Central"/>
</dbReference>
<dbReference type="GO" id="GO:0006412">
    <property type="term" value="P:translation"/>
    <property type="evidence" value="ECO:0000318"/>
    <property type="project" value="GO_Central"/>
</dbReference>
<dbReference type="FunFam" id="1.10.287.1480:FF:000001">
    <property type="entry name" value="30S ribosomal protein S14"/>
    <property type="match status" value="1"/>
</dbReference>
<dbReference type="Gene3D" id="1.10.287.1480">
    <property type="match status" value="1"/>
</dbReference>
<dbReference type="HAMAP" id="MF_00537">
    <property type="entry name" value="Ribosomal_uS14_1"/>
    <property type="match status" value="1"/>
</dbReference>
<dbReference type="InterPro" id="IPR001209">
    <property type="entry name" value="Ribosomal_uS14"/>
</dbReference>
<dbReference type="InterPro" id="IPR023036">
    <property type="entry name" value="Ribosomal_uS14_bac/plastid"/>
</dbReference>
<dbReference type="InterPro" id="IPR018271">
    <property type="entry name" value="Ribosomal_uS14_CS"/>
</dbReference>
<dbReference type="NCBIfam" id="NF006477">
    <property type="entry name" value="PRK08881.1"/>
    <property type="match status" value="1"/>
</dbReference>
<dbReference type="PANTHER" id="PTHR19836">
    <property type="entry name" value="30S RIBOSOMAL PROTEIN S14"/>
    <property type="match status" value="1"/>
</dbReference>
<dbReference type="PANTHER" id="PTHR19836:SF19">
    <property type="entry name" value="SMALL RIBOSOMAL SUBUNIT PROTEIN US14M"/>
    <property type="match status" value="1"/>
</dbReference>
<dbReference type="Pfam" id="PF00253">
    <property type="entry name" value="Ribosomal_S14"/>
    <property type="match status" value="1"/>
</dbReference>
<dbReference type="SUPFAM" id="SSF57716">
    <property type="entry name" value="Glucocorticoid receptor-like (DNA-binding domain)"/>
    <property type="match status" value="1"/>
</dbReference>
<dbReference type="PROSITE" id="PS00527">
    <property type="entry name" value="RIBOSOMAL_S14"/>
    <property type="match status" value="1"/>
</dbReference>
<keyword id="KW-0150">Chloroplast</keyword>
<keyword id="KW-0934">Plastid</keyword>
<keyword id="KW-1185">Reference proteome</keyword>
<keyword id="KW-0687">Ribonucleoprotein</keyword>
<keyword id="KW-0689">Ribosomal protein</keyword>
<keyword id="KW-0694">RNA-binding</keyword>
<keyword id="KW-0699">rRNA-binding</keyword>
<feature type="chain" id="PRO_0000276705" description="Small ribosomal subunit protein uS14c">
    <location>
        <begin position="1"/>
        <end position="103"/>
    </location>
</feature>
<feature type="region of interest" description="Disordered" evidence="2">
    <location>
        <begin position="26"/>
        <end position="56"/>
    </location>
</feature>